<accession>C4ZR69</accession>
<dbReference type="EC" id="3.1.1.-" evidence="1"/>
<dbReference type="EMBL" id="CP001396">
    <property type="protein sequence ID" value="ACR64607.1"/>
    <property type="molecule type" value="Genomic_DNA"/>
</dbReference>
<dbReference type="RefSeq" id="WP_001295191.1">
    <property type="nucleotide sequence ID" value="NC_012759.1"/>
</dbReference>
<dbReference type="SMR" id="C4ZR69"/>
<dbReference type="GeneID" id="93777632"/>
<dbReference type="KEGG" id="ebw:BWG_3904"/>
<dbReference type="HOGENOM" id="CLU_074775_0_0_6"/>
<dbReference type="UniPathway" id="UPA00263">
    <property type="reaction ID" value="UER00377"/>
</dbReference>
<dbReference type="GO" id="GO:0005737">
    <property type="term" value="C:cytoplasm"/>
    <property type="evidence" value="ECO:0007669"/>
    <property type="project" value="UniProtKB-SubCell"/>
</dbReference>
<dbReference type="GO" id="GO:0035460">
    <property type="term" value="F:L-ascorbate 6-phosphate lactonase activity"/>
    <property type="evidence" value="ECO:0007669"/>
    <property type="project" value="InterPro"/>
</dbReference>
<dbReference type="GO" id="GO:0030145">
    <property type="term" value="F:manganese ion binding"/>
    <property type="evidence" value="ECO:0007669"/>
    <property type="project" value="InterPro"/>
</dbReference>
<dbReference type="GO" id="GO:0019854">
    <property type="term" value="P:L-ascorbic acid catabolic process"/>
    <property type="evidence" value="ECO:0007669"/>
    <property type="project" value="UniProtKB-UniRule"/>
</dbReference>
<dbReference type="CDD" id="cd16284">
    <property type="entry name" value="UlaG-like_MBL-fold"/>
    <property type="match status" value="1"/>
</dbReference>
<dbReference type="FunFam" id="3.60.15.10:FF:000004">
    <property type="entry name" value="Probable L-ascorbate-6-phosphate lactonase UlaG"/>
    <property type="match status" value="1"/>
</dbReference>
<dbReference type="Gene3D" id="3.60.15.10">
    <property type="entry name" value="Ribonuclease Z/Hydroxyacylglutathione hydrolase-like"/>
    <property type="match status" value="1"/>
</dbReference>
<dbReference type="HAMAP" id="MF_01266">
    <property type="entry name" value="UlaG"/>
    <property type="match status" value="1"/>
</dbReference>
<dbReference type="InterPro" id="IPR023951">
    <property type="entry name" value="L-ascorbate_6P_UlaG"/>
</dbReference>
<dbReference type="InterPro" id="IPR001279">
    <property type="entry name" value="Metallo-B-lactamas"/>
</dbReference>
<dbReference type="InterPro" id="IPR036866">
    <property type="entry name" value="RibonucZ/Hydroxyglut_hydro"/>
</dbReference>
<dbReference type="InterPro" id="IPR048021">
    <property type="entry name" value="UlaG-like_MBL-fold"/>
</dbReference>
<dbReference type="InterPro" id="IPR050114">
    <property type="entry name" value="UPF0173_UPF0282_UlaG_hydrolase"/>
</dbReference>
<dbReference type="NCBIfam" id="NF008688">
    <property type="entry name" value="PRK11709.1"/>
    <property type="match status" value="1"/>
</dbReference>
<dbReference type="PANTHER" id="PTHR43546:SF9">
    <property type="entry name" value="L-ASCORBATE-6-PHOSPHATE LACTONASE ULAG-RELATED"/>
    <property type="match status" value="1"/>
</dbReference>
<dbReference type="PANTHER" id="PTHR43546">
    <property type="entry name" value="UPF0173 METAL-DEPENDENT HYDROLASE MJ1163-RELATED"/>
    <property type="match status" value="1"/>
</dbReference>
<dbReference type="Pfam" id="PF12706">
    <property type="entry name" value="Lactamase_B_2"/>
    <property type="match status" value="1"/>
</dbReference>
<dbReference type="SUPFAM" id="SSF56281">
    <property type="entry name" value="Metallo-hydrolase/oxidoreductase"/>
    <property type="match status" value="1"/>
</dbReference>
<feature type="chain" id="PRO_1000214147" description="Probable L-ascorbate-6-phosphate lactonase UlaG">
    <location>
        <begin position="1"/>
        <end position="354"/>
    </location>
</feature>
<name>ULAG_ECOBW</name>
<organism>
    <name type="scientific">Escherichia coli (strain K12 / MC4100 / BW2952)</name>
    <dbReference type="NCBI Taxonomy" id="595496"/>
    <lineage>
        <taxon>Bacteria</taxon>
        <taxon>Pseudomonadati</taxon>
        <taxon>Pseudomonadota</taxon>
        <taxon>Gammaproteobacteria</taxon>
        <taxon>Enterobacterales</taxon>
        <taxon>Enterobacteriaceae</taxon>
        <taxon>Escherichia</taxon>
    </lineage>
</organism>
<sequence length="354" mass="40061">MSKVKSITRESWILSTFPEWGSWLNEEIEQEQVAPGTFAMWWLGCTGIWLKSEGGTNVCVDFWCGTGKQSHGNPLMKQGHQMQRMAGVKKLQPNLRTTPFVLDPFAIRQIDAVLATHDHNDHIDVNVAAAVMQNCADDVPFIGPKTCVDLWIGWGVPKERCIVVKPGDVVKVKDIEIHALDAFDRTALITLPADQKAAGVLPDGMDDRAVNYLFKTPGGSLYHSGDSHYSNYYAKHGNEHQIDVALGSYGENPRGITDKMTSADMLRMGEALNAKVVIPFHHDIWSNFQADPQEIRVLWEMKKDRLKYGFKPFIWQVGGKFTWPLDKDNFEYHYPRGFDDCFTIEPDLPFKSFL</sequence>
<proteinExistence type="inferred from homology"/>
<reference key="1">
    <citation type="journal article" date="2009" name="J. Bacteriol.">
        <title>Genomic sequencing reveals regulatory mutations and recombinational events in the widely used MC4100 lineage of Escherichia coli K-12.</title>
        <authorList>
            <person name="Ferenci T."/>
            <person name="Zhou Z."/>
            <person name="Betteridge T."/>
            <person name="Ren Y."/>
            <person name="Liu Y."/>
            <person name="Feng L."/>
            <person name="Reeves P.R."/>
            <person name="Wang L."/>
        </authorList>
    </citation>
    <scope>NUCLEOTIDE SEQUENCE [LARGE SCALE GENOMIC DNA]</scope>
    <source>
        <strain>K12 / MC4100 / BW2952</strain>
    </source>
</reference>
<evidence type="ECO:0000255" key="1">
    <source>
        <dbReference type="HAMAP-Rule" id="MF_01266"/>
    </source>
</evidence>
<comment type="function">
    <text evidence="1">Probably catalyzes the hydrolysis of L-ascorbate-6-P into 3-keto-L-gulonate-6-P. Is essential for L-ascorbate utilization under anaerobic conditions.</text>
</comment>
<comment type="catalytic activity">
    <reaction evidence="1">
        <text>L-ascorbate 6-phosphate + H2O = 3-dehydro-L-gulonate 6-phosphate</text>
        <dbReference type="Rhea" id="RHEA:28803"/>
        <dbReference type="ChEBI" id="CHEBI:15377"/>
        <dbReference type="ChEBI" id="CHEBI:58774"/>
        <dbReference type="ChEBI" id="CHEBI:61698"/>
    </reaction>
</comment>
<comment type="cofactor">
    <cofactor evidence="1">
        <name>a divalent metal cation</name>
        <dbReference type="ChEBI" id="CHEBI:60240"/>
    </cofactor>
</comment>
<comment type="pathway">
    <text evidence="1">Cofactor degradation; L-ascorbate degradation; D-xylulose 5-phosphate from L-ascorbate: step 1/4.</text>
</comment>
<comment type="subcellular location">
    <subcellularLocation>
        <location evidence="1">Cytoplasm</location>
    </subcellularLocation>
</comment>
<comment type="induction">
    <text evidence="1">Induced by L-ascorbate. Repressed by UlaR.</text>
</comment>
<comment type="similarity">
    <text evidence="1">Belongs to the UlaG family.</text>
</comment>
<protein>
    <recommendedName>
        <fullName evidence="1">Probable L-ascorbate-6-phosphate lactonase UlaG</fullName>
        <ecNumber evidence="1">3.1.1.-</ecNumber>
    </recommendedName>
    <alternativeName>
        <fullName evidence="1">L-ascorbate utilization protein G</fullName>
    </alternativeName>
</protein>
<gene>
    <name evidence="1" type="primary">ulaG</name>
    <name type="ordered locus">BWG_3904</name>
</gene>
<keyword id="KW-0963">Cytoplasm</keyword>
<keyword id="KW-0378">Hydrolase</keyword>